<protein>
    <recommendedName>
        <fullName evidence="1">Holo-[acyl-carrier-protein] synthase</fullName>
        <shortName evidence="1">Holo-ACP synthase</shortName>
        <ecNumber evidence="1">2.7.8.7</ecNumber>
    </recommendedName>
    <alternativeName>
        <fullName evidence="1">4'-phosphopantetheinyl transferase AcpS</fullName>
    </alternativeName>
</protein>
<dbReference type="EC" id="2.7.8.7" evidence="1"/>
<dbReference type="EMBL" id="CP001114">
    <property type="protein sequence ID" value="ACO45275.1"/>
    <property type="molecule type" value="Genomic_DNA"/>
</dbReference>
<dbReference type="RefSeq" id="WP_012692398.1">
    <property type="nucleotide sequence ID" value="NC_012526.1"/>
</dbReference>
<dbReference type="SMR" id="C1D023"/>
<dbReference type="STRING" id="546414.Deide_04450"/>
<dbReference type="PaxDb" id="546414-Deide_04450"/>
<dbReference type="KEGG" id="ddr:Deide_04450"/>
<dbReference type="eggNOG" id="COG0736">
    <property type="taxonomic scope" value="Bacteria"/>
</dbReference>
<dbReference type="HOGENOM" id="CLU_089696_0_2_0"/>
<dbReference type="OrthoDB" id="517356at2"/>
<dbReference type="Proteomes" id="UP000002208">
    <property type="component" value="Chromosome"/>
</dbReference>
<dbReference type="GO" id="GO:0005737">
    <property type="term" value="C:cytoplasm"/>
    <property type="evidence" value="ECO:0007669"/>
    <property type="project" value="UniProtKB-SubCell"/>
</dbReference>
<dbReference type="GO" id="GO:0008897">
    <property type="term" value="F:holo-[acyl-carrier-protein] synthase activity"/>
    <property type="evidence" value="ECO:0007669"/>
    <property type="project" value="UniProtKB-UniRule"/>
</dbReference>
<dbReference type="GO" id="GO:0000287">
    <property type="term" value="F:magnesium ion binding"/>
    <property type="evidence" value="ECO:0007669"/>
    <property type="project" value="UniProtKB-UniRule"/>
</dbReference>
<dbReference type="GO" id="GO:0006633">
    <property type="term" value="P:fatty acid biosynthetic process"/>
    <property type="evidence" value="ECO:0007669"/>
    <property type="project" value="UniProtKB-UniRule"/>
</dbReference>
<dbReference type="Gene3D" id="3.90.470.20">
    <property type="entry name" value="4'-phosphopantetheinyl transferase domain"/>
    <property type="match status" value="1"/>
</dbReference>
<dbReference type="HAMAP" id="MF_00101">
    <property type="entry name" value="AcpS"/>
    <property type="match status" value="1"/>
</dbReference>
<dbReference type="InterPro" id="IPR008278">
    <property type="entry name" value="4-PPantetheinyl_Trfase_dom"/>
</dbReference>
<dbReference type="InterPro" id="IPR037143">
    <property type="entry name" value="4-PPantetheinyl_Trfase_dom_sf"/>
</dbReference>
<dbReference type="InterPro" id="IPR002582">
    <property type="entry name" value="ACPS"/>
</dbReference>
<dbReference type="InterPro" id="IPR004568">
    <property type="entry name" value="Ppantetheine-prot_Trfase_dom"/>
</dbReference>
<dbReference type="NCBIfam" id="TIGR00556">
    <property type="entry name" value="pantethn_trn"/>
    <property type="match status" value="1"/>
</dbReference>
<dbReference type="NCBIfam" id="NF011256">
    <property type="entry name" value="PRK14662.1"/>
    <property type="match status" value="1"/>
</dbReference>
<dbReference type="Pfam" id="PF01648">
    <property type="entry name" value="ACPS"/>
    <property type="match status" value="1"/>
</dbReference>
<dbReference type="SUPFAM" id="SSF56214">
    <property type="entry name" value="4'-phosphopantetheinyl transferase"/>
    <property type="match status" value="1"/>
</dbReference>
<feature type="chain" id="PRO_1000202790" description="Holo-[acyl-carrier-protein] synthase">
    <location>
        <begin position="1"/>
        <end position="127"/>
    </location>
</feature>
<feature type="binding site" evidence="1">
    <location>
        <position position="8"/>
    </location>
    <ligand>
        <name>Mg(2+)</name>
        <dbReference type="ChEBI" id="CHEBI:18420"/>
    </ligand>
</feature>
<feature type="binding site" evidence="1">
    <location>
        <position position="56"/>
    </location>
    <ligand>
        <name>Mg(2+)</name>
        <dbReference type="ChEBI" id="CHEBI:18420"/>
    </ligand>
</feature>
<proteinExistence type="inferred from homology"/>
<accession>C1D023</accession>
<organism>
    <name type="scientific">Deinococcus deserti (strain DSM 17065 / CIP 109153 / LMG 22923 / VCD115)</name>
    <dbReference type="NCBI Taxonomy" id="546414"/>
    <lineage>
        <taxon>Bacteria</taxon>
        <taxon>Thermotogati</taxon>
        <taxon>Deinococcota</taxon>
        <taxon>Deinococci</taxon>
        <taxon>Deinococcales</taxon>
        <taxon>Deinococcaceae</taxon>
        <taxon>Deinococcus</taxon>
    </lineage>
</organism>
<name>ACPS_DEIDV</name>
<reference key="1">
    <citation type="journal article" date="2009" name="PLoS Genet.">
        <title>Alliance of proteomics and genomics to unravel the specificities of Sahara bacterium Deinococcus deserti.</title>
        <authorList>
            <person name="de Groot A."/>
            <person name="Dulermo R."/>
            <person name="Ortet P."/>
            <person name="Blanchard L."/>
            <person name="Guerin P."/>
            <person name="Fernandez B."/>
            <person name="Vacherie B."/>
            <person name="Dossat C."/>
            <person name="Jolivet E."/>
            <person name="Siguier P."/>
            <person name="Chandler M."/>
            <person name="Barakat M."/>
            <person name="Dedieu A."/>
            <person name="Barbe V."/>
            <person name="Heulin T."/>
            <person name="Sommer S."/>
            <person name="Achouak W."/>
            <person name="Armengaud J."/>
        </authorList>
    </citation>
    <scope>NUCLEOTIDE SEQUENCE [LARGE SCALE GENOMIC DNA]</scope>
    <source>
        <strain>DSM 17065 / CIP 109153 / LMG 22923 / VCD115</strain>
    </source>
</reference>
<sequence length="127" mass="14622">MIVAVGHDLIEIERIRRMLLREGPRAQKLFAPCELEYAARLSDPTPSLAARFAAKEAFQKVWPRPHGWRDVWVERERTPDGPFPFTPPVLGFTETIAEEMRERGWVAHLTLTHTKEHASAVVVLEER</sequence>
<gene>
    <name evidence="1" type="primary">acpS</name>
    <name type="ordered locus">Deide_04450</name>
</gene>
<evidence type="ECO:0000255" key="1">
    <source>
        <dbReference type="HAMAP-Rule" id="MF_00101"/>
    </source>
</evidence>
<comment type="function">
    <text evidence="1">Transfers the 4'-phosphopantetheine moiety from coenzyme A to a Ser of acyl-carrier-protein.</text>
</comment>
<comment type="catalytic activity">
    <reaction evidence="1">
        <text>apo-[ACP] + CoA = holo-[ACP] + adenosine 3',5'-bisphosphate + H(+)</text>
        <dbReference type="Rhea" id="RHEA:12068"/>
        <dbReference type="Rhea" id="RHEA-COMP:9685"/>
        <dbReference type="Rhea" id="RHEA-COMP:9690"/>
        <dbReference type="ChEBI" id="CHEBI:15378"/>
        <dbReference type="ChEBI" id="CHEBI:29999"/>
        <dbReference type="ChEBI" id="CHEBI:57287"/>
        <dbReference type="ChEBI" id="CHEBI:58343"/>
        <dbReference type="ChEBI" id="CHEBI:64479"/>
        <dbReference type="EC" id="2.7.8.7"/>
    </reaction>
</comment>
<comment type="cofactor">
    <cofactor evidence="1">
        <name>Mg(2+)</name>
        <dbReference type="ChEBI" id="CHEBI:18420"/>
    </cofactor>
</comment>
<comment type="subcellular location">
    <subcellularLocation>
        <location evidence="1">Cytoplasm</location>
    </subcellularLocation>
</comment>
<comment type="similarity">
    <text evidence="1">Belongs to the P-Pant transferase superfamily. AcpS family.</text>
</comment>
<keyword id="KW-0963">Cytoplasm</keyword>
<keyword id="KW-0275">Fatty acid biosynthesis</keyword>
<keyword id="KW-0276">Fatty acid metabolism</keyword>
<keyword id="KW-0444">Lipid biosynthesis</keyword>
<keyword id="KW-0443">Lipid metabolism</keyword>
<keyword id="KW-0460">Magnesium</keyword>
<keyword id="KW-0479">Metal-binding</keyword>
<keyword id="KW-1185">Reference proteome</keyword>
<keyword id="KW-0808">Transferase</keyword>